<gene>
    <name evidence="1" type="primary">mdh</name>
    <name type="ordered locus">ABAYE0465</name>
</gene>
<evidence type="ECO:0000255" key="1">
    <source>
        <dbReference type="HAMAP-Rule" id="MF_01517"/>
    </source>
</evidence>
<comment type="function">
    <text evidence="1">Catalyzes the reversible oxidation of malate to oxaloacetate.</text>
</comment>
<comment type="catalytic activity">
    <reaction evidence="1">
        <text>(S)-malate + NAD(+) = oxaloacetate + NADH + H(+)</text>
        <dbReference type="Rhea" id="RHEA:21432"/>
        <dbReference type="ChEBI" id="CHEBI:15378"/>
        <dbReference type="ChEBI" id="CHEBI:15589"/>
        <dbReference type="ChEBI" id="CHEBI:16452"/>
        <dbReference type="ChEBI" id="CHEBI:57540"/>
        <dbReference type="ChEBI" id="CHEBI:57945"/>
        <dbReference type="EC" id="1.1.1.37"/>
    </reaction>
</comment>
<comment type="similarity">
    <text evidence="1">Belongs to the LDH/MDH superfamily. MDH type 2 family.</text>
</comment>
<dbReference type="EC" id="1.1.1.37" evidence="1"/>
<dbReference type="EMBL" id="CU459141">
    <property type="protein sequence ID" value="CAM85438.1"/>
    <property type="molecule type" value="Genomic_DNA"/>
</dbReference>
<dbReference type="RefSeq" id="WP_000813006.1">
    <property type="nucleotide sequence ID" value="NZ_JBDGFB010000011.1"/>
</dbReference>
<dbReference type="SMR" id="B0V6R7"/>
<dbReference type="EnsemblBacteria" id="CAM85438">
    <property type="protein sequence ID" value="CAM85438"/>
    <property type="gene ID" value="ABAYE0465"/>
</dbReference>
<dbReference type="KEGG" id="aby:ABAYE0465"/>
<dbReference type="HOGENOM" id="CLU_040727_2_0_6"/>
<dbReference type="GO" id="GO:0030060">
    <property type="term" value="F:L-malate dehydrogenase (NAD+) activity"/>
    <property type="evidence" value="ECO:0007669"/>
    <property type="project" value="UniProtKB-UniRule"/>
</dbReference>
<dbReference type="GO" id="GO:0006108">
    <property type="term" value="P:malate metabolic process"/>
    <property type="evidence" value="ECO:0007669"/>
    <property type="project" value="InterPro"/>
</dbReference>
<dbReference type="GO" id="GO:0006099">
    <property type="term" value="P:tricarboxylic acid cycle"/>
    <property type="evidence" value="ECO:0007669"/>
    <property type="project" value="UniProtKB-UniRule"/>
</dbReference>
<dbReference type="CDD" id="cd01338">
    <property type="entry name" value="MDH_chloroplast-like"/>
    <property type="match status" value="1"/>
</dbReference>
<dbReference type="FunFam" id="3.40.50.720:FF:000010">
    <property type="entry name" value="Malate dehydrogenase"/>
    <property type="match status" value="1"/>
</dbReference>
<dbReference type="FunFam" id="3.90.110.10:FF:000002">
    <property type="entry name" value="Malate dehydrogenase"/>
    <property type="match status" value="1"/>
</dbReference>
<dbReference type="Gene3D" id="3.90.110.10">
    <property type="entry name" value="Lactate dehydrogenase/glycoside hydrolase, family 4, C-terminal"/>
    <property type="match status" value="1"/>
</dbReference>
<dbReference type="Gene3D" id="3.40.50.720">
    <property type="entry name" value="NAD(P)-binding Rossmann-like Domain"/>
    <property type="match status" value="1"/>
</dbReference>
<dbReference type="HAMAP" id="MF_01517">
    <property type="entry name" value="Malate_dehydrog_2"/>
    <property type="match status" value="1"/>
</dbReference>
<dbReference type="InterPro" id="IPR001557">
    <property type="entry name" value="L-lactate/malate_DH"/>
</dbReference>
<dbReference type="InterPro" id="IPR022383">
    <property type="entry name" value="Lactate/malate_DH_C"/>
</dbReference>
<dbReference type="InterPro" id="IPR001236">
    <property type="entry name" value="Lactate/malate_DH_N"/>
</dbReference>
<dbReference type="InterPro" id="IPR015955">
    <property type="entry name" value="Lactate_DH/Glyco_Ohase_4_C"/>
</dbReference>
<dbReference type="InterPro" id="IPR010945">
    <property type="entry name" value="Malate_DH_type2"/>
</dbReference>
<dbReference type="InterPro" id="IPR036291">
    <property type="entry name" value="NAD(P)-bd_dom_sf"/>
</dbReference>
<dbReference type="NCBIfam" id="TIGR01759">
    <property type="entry name" value="MalateDH-SF1"/>
    <property type="match status" value="1"/>
</dbReference>
<dbReference type="NCBIfam" id="NF003916">
    <property type="entry name" value="PRK05442.1"/>
    <property type="match status" value="1"/>
</dbReference>
<dbReference type="PANTHER" id="PTHR23382">
    <property type="entry name" value="MALATE DEHYDROGENASE"/>
    <property type="match status" value="1"/>
</dbReference>
<dbReference type="Pfam" id="PF02866">
    <property type="entry name" value="Ldh_1_C"/>
    <property type="match status" value="1"/>
</dbReference>
<dbReference type="Pfam" id="PF00056">
    <property type="entry name" value="Ldh_1_N"/>
    <property type="match status" value="1"/>
</dbReference>
<dbReference type="PIRSF" id="PIRSF000102">
    <property type="entry name" value="Lac_mal_DH"/>
    <property type="match status" value="1"/>
</dbReference>
<dbReference type="SUPFAM" id="SSF56327">
    <property type="entry name" value="LDH C-terminal domain-like"/>
    <property type="match status" value="1"/>
</dbReference>
<dbReference type="SUPFAM" id="SSF51735">
    <property type="entry name" value="NAD(P)-binding Rossmann-fold domains"/>
    <property type="match status" value="1"/>
</dbReference>
<reference key="1">
    <citation type="journal article" date="2008" name="PLoS ONE">
        <title>Comparative analysis of Acinetobacters: three genomes for three lifestyles.</title>
        <authorList>
            <person name="Vallenet D."/>
            <person name="Nordmann P."/>
            <person name="Barbe V."/>
            <person name="Poirel L."/>
            <person name="Mangenot S."/>
            <person name="Bataille E."/>
            <person name="Dossat C."/>
            <person name="Gas S."/>
            <person name="Kreimeyer A."/>
            <person name="Lenoble P."/>
            <person name="Oztas S."/>
            <person name="Poulain J."/>
            <person name="Segurens B."/>
            <person name="Robert C."/>
            <person name="Abergel C."/>
            <person name="Claverie J.-M."/>
            <person name="Raoult D."/>
            <person name="Medigue C."/>
            <person name="Weissenbach J."/>
            <person name="Cruveiller S."/>
        </authorList>
    </citation>
    <scope>NUCLEOTIDE SEQUENCE [LARGE SCALE GENOMIC DNA]</scope>
    <source>
        <strain>AYE</strain>
    </source>
</reference>
<accession>B0V6R7</accession>
<keyword id="KW-0520">NAD</keyword>
<keyword id="KW-0560">Oxidoreductase</keyword>
<keyword id="KW-0816">Tricarboxylic acid cycle</keyword>
<protein>
    <recommendedName>
        <fullName evidence="1">Malate dehydrogenase</fullName>
        <ecNumber evidence="1">1.1.1.37</ecNumber>
    </recommendedName>
</protein>
<feature type="chain" id="PRO_1000191606" description="Malate dehydrogenase">
    <location>
        <begin position="1"/>
        <end position="328"/>
    </location>
</feature>
<feature type="active site" description="Proton acceptor" evidence="1">
    <location>
        <position position="189"/>
    </location>
</feature>
<feature type="binding site" evidence="1">
    <location>
        <begin position="11"/>
        <end position="17"/>
    </location>
    <ligand>
        <name>NAD(+)</name>
        <dbReference type="ChEBI" id="CHEBI:57540"/>
    </ligand>
</feature>
<feature type="binding site" evidence="1">
    <location>
        <position position="94"/>
    </location>
    <ligand>
        <name>substrate</name>
    </ligand>
</feature>
<feature type="binding site" evidence="1">
    <location>
        <position position="100"/>
    </location>
    <ligand>
        <name>substrate</name>
    </ligand>
</feature>
<feature type="binding site" evidence="1">
    <location>
        <position position="107"/>
    </location>
    <ligand>
        <name>NAD(+)</name>
        <dbReference type="ChEBI" id="CHEBI:57540"/>
    </ligand>
</feature>
<feature type="binding site" evidence="1">
    <location>
        <position position="114"/>
    </location>
    <ligand>
        <name>NAD(+)</name>
        <dbReference type="ChEBI" id="CHEBI:57540"/>
    </ligand>
</feature>
<feature type="binding site" evidence="1">
    <location>
        <begin position="131"/>
        <end position="133"/>
    </location>
    <ligand>
        <name>NAD(+)</name>
        <dbReference type="ChEBI" id="CHEBI:57540"/>
    </ligand>
</feature>
<feature type="binding site" evidence="1">
    <location>
        <position position="133"/>
    </location>
    <ligand>
        <name>substrate</name>
    </ligand>
</feature>
<feature type="binding site" evidence="1">
    <location>
        <position position="164"/>
    </location>
    <ligand>
        <name>substrate</name>
    </ligand>
</feature>
<organism>
    <name type="scientific">Acinetobacter baumannii (strain AYE)</name>
    <dbReference type="NCBI Taxonomy" id="509173"/>
    <lineage>
        <taxon>Bacteria</taxon>
        <taxon>Pseudomonadati</taxon>
        <taxon>Pseudomonadota</taxon>
        <taxon>Gammaproteobacteria</taxon>
        <taxon>Moraxellales</taxon>
        <taxon>Moraxellaceae</taxon>
        <taxon>Acinetobacter</taxon>
        <taxon>Acinetobacter calcoaceticus/baumannii complex</taxon>
    </lineage>
</organism>
<sequence length="328" mass="35323">MKQPVRVAVTGAAGQIGYSLLFRIASGEMLGKDQPVILQLLEVPVEKAQQALKGVMMELDDCAFPLLAGMIGTDDPKVAFKDADYALLVGSRPRGPGMERADLLKVNGEIFIGQGQALNEVASRDVKVLVVGNPANTNAYIAMKSAPDLPAKNFTAMLRLDHNRALTQVAQKAGVAVADIEKLTVWGNHSPTMYADYRFATANGESLKDKINDPAWNKDVFLPTVGKRGAAIIEARGLSSAASAANAAIDHMRDWALGTNGKWVTMGVPSDGSYGIPEGVMFGFPVTTENGEYKIVQGLEIDEFSRERINFTLNELEEERAAIADMVK</sequence>
<name>MDH_ACIBY</name>
<proteinExistence type="inferred from homology"/>